<accession>Q75G39</accession>
<organism>
    <name type="scientific">Eremothecium gossypii (strain ATCC 10895 / CBS 109.51 / FGSC 9923 / NRRL Y-1056)</name>
    <name type="common">Yeast</name>
    <name type="synonym">Ashbya gossypii</name>
    <dbReference type="NCBI Taxonomy" id="284811"/>
    <lineage>
        <taxon>Eukaryota</taxon>
        <taxon>Fungi</taxon>
        <taxon>Dikarya</taxon>
        <taxon>Ascomycota</taxon>
        <taxon>Saccharomycotina</taxon>
        <taxon>Saccharomycetes</taxon>
        <taxon>Saccharomycetales</taxon>
        <taxon>Saccharomycetaceae</taxon>
        <taxon>Eremothecium</taxon>
    </lineage>
</organism>
<keyword id="KW-0066">ATP synthesis</keyword>
<keyword id="KW-0138">CF(0)</keyword>
<keyword id="KW-0375">Hydrogen ion transport</keyword>
<keyword id="KW-0406">Ion transport</keyword>
<keyword id="KW-0472">Membrane</keyword>
<keyword id="KW-0496">Mitochondrion</keyword>
<keyword id="KW-0999">Mitochondrion inner membrane</keyword>
<keyword id="KW-1185">Reference proteome</keyword>
<keyword id="KW-0812">Transmembrane</keyword>
<keyword id="KW-1133">Transmembrane helix</keyword>
<keyword id="KW-0813">Transport</keyword>
<name>ATP6_EREGS</name>
<proteinExistence type="inferred from homology"/>
<geneLocation type="mitochondrion"/>
<gene>
    <name type="primary">ATP6</name>
    <name type="ordered locus">AMI006W</name>
    <name type="ORF">AgATP6</name>
</gene>
<comment type="function">
    <text>Mitochondrial membrane ATP synthase (F(1)F(0) ATP synthase or Complex V) produces ATP from ADP in the presence of a proton gradient across the membrane which is generated by electron transport complexes of the respiratory chain. F-type ATPases consist of two structural domains, F(1) - containing the extramembraneous catalytic core and F(0) - containing the membrane proton channel, linked together by a central stalk and a peripheral stalk. During catalysis, ATP synthesis in the catalytic domain of F(1) is coupled via a rotary mechanism of the central stalk subunits to proton translocation. Key component of the proton channel; it may play a direct role in the translocation of protons across the membrane.</text>
</comment>
<comment type="subunit">
    <text>F-type ATPases have 2 components, CF(1) - the catalytic core - and CF(0) - the membrane proton channel. In yeast, the dimeric form of ATP synthase consists of 18 polypeptides: alpha, beta, gamma, delta, epsilon, 4 (B), 5 (OSCP), 6 (A), 8, 9 (C), d, E (Tim11), f, g, h, i, j and k.</text>
</comment>
<comment type="subcellular location">
    <subcellularLocation>
        <location>Mitochondrion inner membrane</location>
        <topology>Multi-pass membrane protein</topology>
    </subcellularLocation>
</comment>
<comment type="similarity">
    <text evidence="3">Belongs to the ATPase A chain family.</text>
</comment>
<dbReference type="EMBL" id="AE016821">
    <property type="protein sequence ID" value="AAS50173.1"/>
    <property type="molecule type" value="Genomic_DNA"/>
</dbReference>
<dbReference type="RefSeq" id="NP_987083.1">
    <property type="nucleotide sequence ID" value="NC_005789.1"/>
</dbReference>
<dbReference type="SMR" id="Q75G39"/>
<dbReference type="FunCoup" id="Q75G39">
    <property type="interactions" value="265"/>
</dbReference>
<dbReference type="STRING" id="284811.Q75G39"/>
<dbReference type="EnsemblFungi" id="AAS50173">
    <property type="protein sequence ID" value="AAS50173"/>
    <property type="gene ID" value="AGOS_AMI006W"/>
</dbReference>
<dbReference type="GeneID" id="2760773"/>
<dbReference type="KEGG" id="ago:AGOS_AMI006W"/>
<dbReference type="eggNOG" id="KOG4665">
    <property type="taxonomic scope" value="Eukaryota"/>
</dbReference>
<dbReference type="HOGENOM" id="CLU_041018_0_2_1"/>
<dbReference type="InParanoid" id="Q75G39"/>
<dbReference type="OMA" id="FFDQFMS"/>
<dbReference type="OrthoDB" id="5976622at2759"/>
<dbReference type="Proteomes" id="UP000000591">
    <property type="component" value="Mitochondrion"/>
</dbReference>
<dbReference type="GO" id="GO:0005743">
    <property type="term" value="C:mitochondrial inner membrane"/>
    <property type="evidence" value="ECO:0007669"/>
    <property type="project" value="UniProtKB-SubCell"/>
</dbReference>
<dbReference type="GO" id="GO:0045259">
    <property type="term" value="C:proton-transporting ATP synthase complex"/>
    <property type="evidence" value="ECO:0000318"/>
    <property type="project" value="GO_Central"/>
</dbReference>
<dbReference type="GO" id="GO:0046933">
    <property type="term" value="F:proton-transporting ATP synthase activity, rotational mechanism"/>
    <property type="evidence" value="ECO:0007669"/>
    <property type="project" value="EnsemblFungi"/>
</dbReference>
<dbReference type="GO" id="GO:0015986">
    <property type="term" value="P:proton motive force-driven ATP synthesis"/>
    <property type="evidence" value="ECO:0000318"/>
    <property type="project" value="GO_Central"/>
</dbReference>
<dbReference type="CDD" id="cd00310">
    <property type="entry name" value="ATP-synt_Fo_a_6"/>
    <property type="match status" value="1"/>
</dbReference>
<dbReference type="FunFam" id="1.20.120.220:FF:000003">
    <property type="entry name" value="ATP synthase subunit a"/>
    <property type="match status" value="1"/>
</dbReference>
<dbReference type="Gene3D" id="1.20.120.220">
    <property type="entry name" value="ATP synthase, F0 complex, subunit A"/>
    <property type="match status" value="1"/>
</dbReference>
<dbReference type="HAMAP" id="MF_01393">
    <property type="entry name" value="ATP_synth_a_bact"/>
    <property type="match status" value="1"/>
</dbReference>
<dbReference type="InterPro" id="IPR000568">
    <property type="entry name" value="ATP_synth_F0_asu"/>
</dbReference>
<dbReference type="InterPro" id="IPR023011">
    <property type="entry name" value="ATP_synth_F0_asu_AS"/>
</dbReference>
<dbReference type="InterPro" id="IPR045083">
    <property type="entry name" value="ATP_synth_F0_asu_bact/mt"/>
</dbReference>
<dbReference type="InterPro" id="IPR035908">
    <property type="entry name" value="F0_ATP_A_sf"/>
</dbReference>
<dbReference type="NCBIfam" id="TIGR01131">
    <property type="entry name" value="ATP_synt_6_or_A"/>
    <property type="match status" value="1"/>
</dbReference>
<dbReference type="PANTHER" id="PTHR11410">
    <property type="entry name" value="ATP SYNTHASE SUBUNIT A"/>
    <property type="match status" value="1"/>
</dbReference>
<dbReference type="PANTHER" id="PTHR11410:SF0">
    <property type="entry name" value="ATP SYNTHASE SUBUNIT A"/>
    <property type="match status" value="1"/>
</dbReference>
<dbReference type="Pfam" id="PF00119">
    <property type="entry name" value="ATP-synt_A"/>
    <property type="match status" value="1"/>
</dbReference>
<dbReference type="PRINTS" id="PR00123">
    <property type="entry name" value="ATPASEA"/>
</dbReference>
<dbReference type="SUPFAM" id="SSF81336">
    <property type="entry name" value="F1F0 ATP synthase subunit A"/>
    <property type="match status" value="1"/>
</dbReference>
<dbReference type="PROSITE" id="PS00449">
    <property type="entry name" value="ATPASE_A"/>
    <property type="match status" value="1"/>
</dbReference>
<evidence type="ECO:0000250" key="1"/>
<evidence type="ECO:0000255" key="2"/>
<evidence type="ECO:0000305" key="3"/>
<reference key="1">
    <citation type="journal article" date="2004" name="Science">
        <title>The Ashbya gossypii genome as a tool for mapping the ancient Saccharomyces cerevisiae genome.</title>
        <authorList>
            <person name="Dietrich F.S."/>
            <person name="Voegeli S."/>
            <person name="Brachat S."/>
            <person name="Lerch A."/>
            <person name="Gates K."/>
            <person name="Steiner S."/>
            <person name="Mohr C."/>
            <person name="Poehlmann R."/>
            <person name="Luedi P."/>
            <person name="Choi S."/>
            <person name="Wing R.A."/>
            <person name="Flavier A."/>
            <person name="Gaffney T.D."/>
            <person name="Philippsen P."/>
        </authorList>
    </citation>
    <scope>NUCLEOTIDE SEQUENCE [LARGE SCALE GENOMIC DNA]</scope>
    <source>
        <strain>ATCC 10895 / CBS 109.51 / FGSC 9923 / NRRL Y-1056</strain>
    </source>
</reference>
<reference key="2">
    <citation type="journal article" date="2013" name="G3 (Bethesda)">
        <title>Genomes of Ashbya fungi isolated from insects reveal four mating-type loci, numerous translocations, lack of transposons, and distinct gene duplications.</title>
        <authorList>
            <person name="Dietrich F.S."/>
            <person name="Voegeli S."/>
            <person name="Kuo S."/>
            <person name="Philippsen P."/>
        </authorList>
    </citation>
    <scope>GENOME REANNOTATION</scope>
    <source>
        <strain>ATCC 10895 / CBS 109.51 / FGSC 9923 / NRRL Y-1056</strain>
    </source>
</reference>
<feature type="propeptide" id="PRO_0000002606" description="Removed in mature form" evidence="1">
    <location>
        <begin position="1"/>
        <end position="14"/>
    </location>
</feature>
<feature type="chain" id="PRO_0000002607" description="ATP synthase subunit a">
    <location>
        <begin position="15"/>
        <end position="263"/>
    </location>
</feature>
<feature type="transmembrane region" description="Helical" evidence="2">
    <location>
        <begin position="35"/>
        <end position="57"/>
    </location>
</feature>
<feature type="transmembrane region" description="Helical" evidence="2">
    <location>
        <begin position="95"/>
        <end position="117"/>
    </location>
</feature>
<feature type="transmembrane region" description="Helical" evidence="2">
    <location>
        <begin position="129"/>
        <end position="151"/>
    </location>
</feature>
<feature type="transmembrane region" description="Helical" evidence="2">
    <location>
        <begin position="156"/>
        <end position="178"/>
    </location>
</feature>
<feature type="transmembrane region" description="Helical" evidence="2">
    <location>
        <begin position="191"/>
        <end position="213"/>
    </location>
</feature>
<feature type="transmembrane region" description="Helical" evidence="2">
    <location>
        <begin position="228"/>
        <end position="250"/>
    </location>
</feature>
<sequence>MYLNNNNNMKYYINSPLEQFEIRDLLGLTSPMMDFSFINITNFGLYTMITLLVILTMNLMTNNYNKLVGSNWYLSQEMIYDTIMNMVKTQIGGKVWGYYFPLVYTFFITIFTMNLISMIPYSFAMTSHVVFVVSMSMIIWLGTTIIGFYTHGLKFFGLFLPTGTPLILVPLLVSIELLSYFARTISLGLRLSANIMAGHLLIVILGGLLFNLMAMNILTFLLGFLPMIAILGIVCLEFAITIIQAYVWCILMSSYLKDTIYLH</sequence>
<protein>
    <recommendedName>
        <fullName>ATP synthase subunit a</fullName>
    </recommendedName>
    <alternativeName>
        <fullName>F-ATPase protein 6</fullName>
    </alternativeName>
</protein>